<comment type="function">
    <text>SASP are bound to spore DNA. They are double-stranded DNA-binding proteins that cause DNA to change to an a-like conformation. They protect the DNA backbone from chemical and enzymatic cleavage and are thus involved in dormant spore's high resistance to UV light.</text>
</comment>
<comment type="miscellaneous">
    <text>SASP are degraded in the first minutes of spore germination and provide amino acids for both new protein synthesis and metabolism.</text>
</comment>
<comment type="similarity">
    <text evidence="1">Belongs to the alpha/beta-type SASP family.</text>
</comment>
<organism>
    <name type="scientific">Sporosarcina ureae</name>
    <dbReference type="NCBI Taxonomy" id="1571"/>
    <lineage>
        <taxon>Bacteria</taxon>
        <taxon>Bacillati</taxon>
        <taxon>Bacillota</taxon>
        <taxon>Bacilli</taxon>
        <taxon>Bacillales</taxon>
        <taxon>Caryophanaceae</taxon>
        <taxon>Sporosarcina</taxon>
    </lineage>
</organism>
<dbReference type="EMBL" id="X55158">
    <property type="protein sequence ID" value="CAA38957.1"/>
    <property type="molecule type" value="Genomic_DNA"/>
</dbReference>
<dbReference type="PIR" id="A48180">
    <property type="entry name" value="A48180"/>
</dbReference>
<dbReference type="RefSeq" id="WP_029053858.1">
    <property type="nucleotide sequence ID" value="NZ_CP015108.1"/>
</dbReference>
<dbReference type="SMR" id="P52968"/>
<dbReference type="eggNOG" id="ENOG5032YCI">
    <property type="taxonomic scope" value="Bacteria"/>
</dbReference>
<dbReference type="GO" id="GO:0003690">
    <property type="term" value="F:double-stranded DNA binding"/>
    <property type="evidence" value="ECO:0007669"/>
    <property type="project" value="InterPro"/>
</dbReference>
<dbReference type="GO" id="GO:0006265">
    <property type="term" value="P:DNA topological change"/>
    <property type="evidence" value="ECO:0007669"/>
    <property type="project" value="InterPro"/>
</dbReference>
<dbReference type="GO" id="GO:0030435">
    <property type="term" value="P:sporulation resulting in formation of a cellular spore"/>
    <property type="evidence" value="ECO:0007669"/>
    <property type="project" value="UniProtKB-KW"/>
</dbReference>
<dbReference type="Gene3D" id="6.10.10.80">
    <property type="entry name" value="Small, acid-soluble spore protein, alpha/beta type-like"/>
    <property type="match status" value="1"/>
</dbReference>
<dbReference type="InterPro" id="IPR001448">
    <property type="entry name" value="SASP_alpha/beta-type"/>
</dbReference>
<dbReference type="InterPro" id="IPR018126">
    <property type="entry name" value="SASP_alpha/beta-type_CS"/>
</dbReference>
<dbReference type="InterPro" id="IPR050847">
    <property type="entry name" value="SASP_DNA-binding"/>
</dbReference>
<dbReference type="InterPro" id="IPR038300">
    <property type="entry name" value="SASP_sf_alpha/beta"/>
</dbReference>
<dbReference type="PANTHER" id="PTHR36107">
    <property type="entry name" value="SMALL, ACID-SOLUBLE SPORE PROTEIN A"/>
    <property type="match status" value="1"/>
</dbReference>
<dbReference type="PANTHER" id="PTHR36107:SF1">
    <property type="entry name" value="SMALL, ACID-SOLUBLE SPORE PROTEIN A"/>
    <property type="match status" value="1"/>
</dbReference>
<dbReference type="Pfam" id="PF00269">
    <property type="entry name" value="SASP"/>
    <property type="match status" value="1"/>
</dbReference>
<dbReference type="PROSITE" id="PS00304">
    <property type="entry name" value="SASP_1"/>
    <property type="match status" value="1"/>
</dbReference>
<dbReference type="PROSITE" id="PS00684">
    <property type="entry name" value="SASP_2"/>
    <property type="match status" value="1"/>
</dbReference>
<reference key="1">
    <citation type="journal article" date="1990" name="FEMS Microbiol. Lett.">
        <title>Small, acid-soluble, spore proteins and their genes from two species of Sporosarcina.</title>
        <authorList>
            <person name="Magill N.G."/>
            <person name="Loshon C.A."/>
            <person name="Setlow P."/>
        </authorList>
    </citation>
    <scope>NUCLEOTIDE SEQUENCE [GENOMIC DNA]</scope>
    <source>
        <strain>ATCC 13881 / BS 860</strain>
    </source>
</reference>
<feature type="chain" id="PRO_0000196312" description="Small, acid-soluble spore protein 1">
    <location>
        <begin position="1"/>
        <end position="69"/>
    </location>
</feature>
<feature type="site" description="Cleavage; by spore protease">
    <location>
        <begin position="27"/>
        <end position="28"/>
    </location>
</feature>
<sequence length="69" mass="7451">MTNNNNSNSNQLLVPGVQQAINQMKEEIANEFGVNLGPDSTSRANGSVGGEITKRLVRQAQSQMNGYTK</sequence>
<accession>P52968</accession>
<protein>
    <recommendedName>
        <fullName>Small, acid-soluble spore protein 1</fullName>
        <shortName>SASP</shortName>
    </recommendedName>
</protein>
<name>SAS1_SPOUR</name>
<evidence type="ECO:0000305" key="1"/>
<gene>
    <name type="primary">Su-1</name>
</gene>
<proteinExistence type="inferred from homology"/>
<keyword id="KW-0238">DNA-binding</keyword>
<keyword id="KW-0749">Sporulation</keyword>